<evidence type="ECO:0000255" key="1">
    <source>
        <dbReference type="HAMAP-Rule" id="MF_00362"/>
    </source>
</evidence>
<evidence type="ECO:0000305" key="2"/>
<dbReference type="EMBL" id="CP000576">
    <property type="protein sequence ID" value="ABO16845.1"/>
    <property type="molecule type" value="Genomic_DNA"/>
</dbReference>
<dbReference type="RefSeq" id="WP_011862246.1">
    <property type="nucleotide sequence ID" value="NC_009091.1"/>
</dbReference>
<dbReference type="SMR" id="A3PAS0"/>
<dbReference type="STRING" id="167546.P9301_02221"/>
<dbReference type="KEGG" id="pmg:P9301_02221"/>
<dbReference type="eggNOG" id="COG0244">
    <property type="taxonomic scope" value="Bacteria"/>
</dbReference>
<dbReference type="HOGENOM" id="CLU_092227_1_1_3"/>
<dbReference type="OrthoDB" id="9808307at2"/>
<dbReference type="Proteomes" id="UP000001430">
    <property type="component" value="Chromosome"/>
</dbReference>
<dbReference type="GO" id="GO:1990904">
    <property type="term" value="C:ribonucleoprotein complex"/>
    <property type="evidence" value="ECO:0007669"/>
    <property type="project" value="UniProtKB-KW"/>
</dbReference>
<dbReference type="GO" id="GO:0005840">
    <property type="term" value="C:ribosome"/>
    <property type="evidence" value="ECO:0007669"/>
    <property type="project" value="UniProtKB-KW"/>
</dbReference>
<dbReference type="GO" id="GO:0070180">
    <property type="term" value="F:large ribosomal subunit rRNA binding"/>
    <property type="evidence" value="ECO:0007669"/>
    <property type="project" value="UniProtKB-UniRule"/>
</dbReference>
<dbReference type="GO" id="GO:0006412">
    <property type="term" value="P:translation"/>
    <property type="evidence" value="ECO:0007669"/>
    <property type="project" value="UniProtKB-UniRule"/>
</dbReference>
<dbReference type="CDD" id="cd05797">
    <property type="entry name" value="Ribosomal_L10"/>
    <property type="match status" value="1"/>
</dbReference>
<dbReference type="Gene3D" id="3.30.70.1730">
    <property type="match status" value="1"/>
</dbReference>
<dbReference type="Gene3D" id="6.10.250.290">
    <property type="match status" value="1"/>
</dbReference>
<dbReference type="HAMAP" id="MF_00362">
    <property type="entry name" value="Ribosomal_uL10"/>
    <property type="match status" value="1"/>
</dbReference>
<dbReference type="InterPro" id="IPR001790">
    <property type="entry name" value="Ribosomal_uL10"/>
</dbReference>
<dbReference type="InterPro" id="IPR043141">
    <property type="entry name" value="Ribosomal_uL10-like_sf"/>
</dbReference>
<dbReference type="InterPro" id="IPR022973">
    <property type="entry name" value="Ribosomal_uL10_bac"/>
</dbReference>
<dbReference type="InterPro" id="IPR047865">
    <property type="entry name" value="Ribosomal_uL10_bac_type"/>
</dbReference>
<dbReference type="NCBIfam" id="NF000955">
    <property type="entry name" value="PRK00099.1-1"/>
    <property type="match status" value="1"/>
</dbReference>
<dbReference type="PANTHER" id="PTHR11560">
    <property type="entry name" value="39S RIBOSOMAL PROTEIN L10, MITOCHONDRIAL"/>
    <property type="match status" value="1"/>
</dbReference>
<dbReference type="Pfam" id="PF00466">
    <property type="entry name" value="Ribosomal_L10"/>
    <property type="match status" value="1"/>
</dbReference>
<dbReference type="SUPFAM" id="SSF160369">
    <property type="entry name" value="Ribosomal protein L10-like"/>
    <property type="match status" value="1"/>
</dbReference>
<sequence length="175" mass="19012">MGRTLENKQQIVTEIKSLLNDSEMAVVLDYKGLTIKEMSDLRSRLQTTNGICKVTKNSLMRKAIDGDSNWNDLESLLTGTNAFVLIKEDVGGAVKAIQSFQKDTKKSETKGALFEGRLLSDSEIKEIASLPSKEVLMAKIAGALNGVATKIAISINEVPSGLARSLKQHSEKSES</sequence>
<comment type="function">
    <text evidence="1">Forms part of the ribosomal stalk, playing a central role in the interaction of the ribosome with GTP-bound translation factors.</text>
</comment>
<comment type="subunit">
    <text evidence="1">Part of the ribosomal stalk of the 50S ribosomal subunit. The N-terminus interacts with L11 and the large rRNA to form the base of the stalk. The C-terminus forms an elongated spine to which L12 dimers bind in a sequential fashion forming a multimeric L10(L12)X complex.</text>
</comment>
<comment type="similarity">
    <text evidence="1">Belongs to the universal ribosomal protein uL10 family.</text>
</comment>
<gene>
    <name evidence="1" type="primary">rplJ</name>
    <name evidence="1" type="synonym">rpl10</name>
    <name type="ordered locus">P9301_02221</name>
</gene>
<keyword id="KW-1185">Reference proteome</keyword>
<keyword id="KW-0687">Ribonucleoprotein</keyword>
<keyword id="KW-0689">Ribosomal protein</keyword>
<keyword id="KW-0694">RNA-binding</keyword>
<keyword id="KW-0699">rRNA-binding</keyword>
<accession>A3PAS0</accession>
<feature type="chain" id="PRO_1000005555" description="Large ribosomal subunit protein uL10">
    <location>
        <begin position="1"/>
        <end position="175"/>
    </location>
</feature>
<reference key="1">
    <citation type="journal article" date="2007" name="PLoS Genet.">
        <title>Patterns and implications of gene gain and loss in the evolution of Prochlorococcus.</title>
        <authorList>
            <person name="Kettler G.C."/>
            <person name="Martiny A.C."/>
            <person name="Huang K."/>
            <person name="Zucker J."/>
            <person name="Coleman M.L."/>
            <person name="Rodrigue S."/>
            <person name="Chen F."/>
            <person name="Lapidus A."/>
            <person name="Ferriera S."/>
            <person name="Johnson J."/>
            <person name="Steglich C."/>
            <person name="Church G.M."/>
            <person name="Richardson P."/>
            <person name="Chisholm S.W."/>
        </authorList>
    </citation>
    <scope>NUCLEOTIDE SEQUENCE [LARGE SCALE GENOMIC DNA]</scope>
    <source>
        <strain>MIT 9301</strain>
    </source>
</reference>
<protein>
    <recommendedName>
        <fullName evidence="1">Large ribosomal subunit protein uL10</fullName>
    </recommendedName>
    <alternativeName>
        <fullName evidence="2">50S ribosomal protein L10</fullName>
    </alternativeName>
</protein>
<organism>
    <name type="scientific">Prochlorococcus marinus (strain MIT 9301)</name>
    <dbReference type="NCBI Taxonomy" id="167546"/>
    <lineage>
        <taxon>Bacteria</taxon>
        <taxon>Bacillati</taxon>
        <taxon>Cyanobacteriota</taxon>
        <taxon>Cyanophyceae</taxon>
        <taxon>Synechococcales</taxon>
        <taxon>Prochlorococcaceae</taxon>
        <taxon>Prochlorococcus</taxon>
    </lineage>
</organism>
<name>RL10_PROM0</name>
<proteinExistence type="inferred from homology"/>